<keyword id="KW-0965">Cell junction</keyword>
<keyword id="KW-1003">Cell membrane</keyword>
<keyword id="KW-0303">Gap junction</keyword>
<keyword id="KW-0325">Glycoprotein</keyword>
<keyword id="KW-0407">Ion channel</keyword>
<keyword id="KW-0406">Ion transport</keyword>
<keyword id="KW-0472">Membrane</keyword>
<keyword id="KW-1185">Reference proteome</keyword>
<keyword id="KW-0812">Transmembrane</keyword>
<keyword id="KW-1133">Transmembrane helix</keyword>
<keyword id="KW-0813">Transport</keyword>
<comment type="function">
    <text evidence="2 5 6">Structural component of the gap junctions (By similarity). Plays a role in oocyte directional transit in the spermatheca during ovulation by facilitating the directional propagation of the calcium signal in the spermatheca (PubMed:23671426). Plays a role in male tail tip morphogenesis (PubMed:21408209).</text>
</comment>
<comment type="subcellular location">
    <subcellularLocation>
        <location evidence="7">Cell membrane</location>
        <topology evidence="3">Multi-pass membrane protein</topology>
    </subcellularLocation>
    <subcellularLocation>
        <location evidence="1">Cell junction</location>
        <location evidence="1">Gap junction</location>
    </subcellularLocation>
</comment>
<comment type="developmental stage">
    <text evidence="5">Expressed in hyp8-11 tail tip cells during the L4 larval stage.</text>
</comment>
<comment type="disruption phenotype">
    <text evidence="5 6">RNAi-mediated knockdown causes defective oocyte transit through the spermatheca. Calcium oscillations triggered during ovulation are random resulting in uncoordinated spermatheca constrictions. Oocytes enter the spermatheca normally but change direction several times before returning into the gonad or proceeding into the uterus. RNAi-mediated knockdown disrupts tail tip morphogenesis resulting in retention of the pointed larval tail tip in adult males (also known as the Lep phenotype) (PubMed:21408209).</text>
</comment>
<comment type="similarity">
    <text evidence="3">Belongs to the pannexin family.</text>
</comment>
<proteinExistence type="evidence at protein level"/>
<evidence type="ECO:0000250" key="1"/>
<evidence type="ECO:0000250" key="2">
    <source>
        <dbReference type="UniProtKB" id="Q9V427"/>
    </source>
</evidence>
<evidence type="ECO:0000255" key="3">
    <source>
        <dbReference type="PROSITE-ProRule" id="PRU00351"/>
    </source>
</evidence>
<evidence type="ECO:0000269" key="4">
    <source>
    </source>
</evidence>
<evidence type="ECO:0000269" key="5">
    <source>
    </source>
</evidence>
<evidence type="ECO:0000269" key="6">
    <source>
    </source>
</evidence>
<evidence type="ECO:0000305" key="7"/>
<evidence type="ECO:0000312" key="8">
    <source>
        <dbReference type="WormBase" id="ZK770.3"/>
    </source>
</evidence>
<sequence length="408" mass="47091">MNVIQNLLSAVSPQPDGDFVDKLNYCATTIGLVLASAFITGWSFVGSPIDCWFPAYYKGWWAEYALDYCYVQNTFFVPFSEDKAERSYNWEQLVADKQNTTSLKQTNQIGYYQWVPFILALQAMLFYFPVVIWRLFYGMAGQNVTSLCNTCTATEGNEESRKGTITTIAGYISQKRHRNLIVKQLSGFQNRANGSAVITSYLFMKALFLINVLFQFVLLKRMLGVDSYFWGAEVTSDLWSGNEWPETGNFPRVTMCEYEVRNLDNIHKHSVQCVLMINMFNEKIFVALWWWLCFLTVVTITNTIYWFWRASGTSVSKNFIRPYVEDIDPKVKNNRGKLQQFVSEFLSPDTVFILRLIELNNGKTPVVELIRDMWRRFNTAVPPPYSAPPLLVKDGAPLLKNFQDESEM</sequence>
<name>INX12_CAEEL</name>
<organism>
    <name type="scientific">Caenorhabditis elegans</name>
    <dbReference type="NCBI Taxonomy" id="6239"/>
    <lineage>
        <taxon>Eukaryota</taxon>
        <taxon>Metazoa</taxon>
        <taxon>Ecdysozoa</taxon>
        <taxon>Nematoda</taxon>
        <taxon>Chromadorea</taxon>
        <taxon>Rhabditida</taxon>
        <taxon>Rhabditina</taxon>
        <taxon>Rhabditomorpha</taxon>
        <taxon>Rhabditoidea</taxon>
        <taxon>Rhabditidae</taxon>
        <taxon>Peloderinae</taxon>
        <taxon>Caenorhabditis</taxon>
    </lineage>
</organism>
<dbReference type="EMBL" id="BX284601">
    <property type="protein sequence ID" value="CCD66426.1"/>
    <property type="molecule type" value="Genomic_DNA"/>
</dbReference>
<dbReference type="PIR" id="T34467">
    <property type="entry name" value="T34467"/>
</dbReference>
<dbReference type="RefSeq" id="NP_491213.1">
    <property type="nucleotide sequence ID" value="NM_058812.9"/>
</dbReference>
<dbReference type="SMR" id="O01634"/>
<dbReference type="BioGRID" id="37418">
    <property type="interactions" value="2"/>
</dbReference>
<dbReference type="DIP" id="DIP-26804N"/>
<dbReference type="FunCoup" id="O01634">
    <property type="interactions" value="384"/>
</dbReference>
<dbReference type="STRING" id="6239.ZK770.3.2"/>
<dbReference type="GlyCosmos" id="O01634">
    <property type="glycosylation" value="1 site, No reported glycans"/>
</dbReference>
<dbReference type="iPTMnet" id="O01634"/>
<dbReference type="PaxDb" id="6239-ZK770.3.1"/>
<dbReference type="PeptideAtlas" id="O01634"/>
<dbReference type="EnsemblMetazoa" id="ZK770.3.1">
    <property type="protein sequence ID" value="ZK770.3.1"/>
    <property type="gene ID" value="WBGene00002134"/>
</dbReference>
<dbReference type="GeneID" id="171944"/>
<dbReference type="KEGG" id="cel:CELE_ZK770.3"/>
<dbReference type="UCSC" id="ZK770.3.1">
    <property type="organism name" value="c. elegans"/>
</dbReference>
<dbReference type="AGR" id="WB:WBGene00002134"/>
<dbReference type="CTD" id="171944"/>
<dbReference type="WormBase" id="ZK770.3">
    <property type="protein sequence ID" value="CE15413"/>
    <property type="gene ID" value="WBGene00002134"/>
    <property type="gene designation" value="inx-12"/>
</dbReference>
<dbReference type="eggNOG" id="ENOG502QS5B">
    <property type="taxonomic scope" value="Eukaryota"/>
</dbReference>
<dbReference type="HOGENOM" id="CLU_035763_0_1_1"/>
<dbReference type="InParanoid" id="O01634"/>
<dbReference type="OMA" id="MYTAVKP"/>
<dbReference type="OrthoDB" id="5867527at2759"/>
<dbReference type="PhylomeDB" id="O01634"/>
<dbReference type="PRO" id="PR:O01634"/>
<dbReference type="Proteomes" id="UP000001940">
    <property type="component" value="Chromosome I"/>
</dbReference>
<dbReference type="Bgee" id="WBGene00002134">
    <property type="expression patterns" value="Expressed in larva and 4 other cell types or tissues"/>
</dbReference>
<dbReference type="GO" id="GO:0005921">
    <property type="term" value="C:gap junction"/>
    <property type="evidence" value="ECO:0000250"/>
    <property type="project" value="UniProtKB"/>
</dbReference>
<dbReference type="GO" id="GO:0005886">
    <property type="term" value="C:plasma membrane"/>
    <property type="evidence" value="ECO:0000250"/>
    <property type="project" value="UniProtKB"/>
</dbReference>
<dbReference type="GO" id="GO:0005243">
    <property type="term" value="F:gap junction channel activity"/>
    <property type="evidence" value="ECO:0000250"/>
    <property type="project" value="UniProtKB"/>
</dbReference>
<dbReference type="GO" id="GO:0055077">
    <property type="term" value="F:gap junction hemi-channel activity"/>
    <property type="evidence" value="ECO:0000250"/>
    <property type="project" value="UniProtKB"/>
</dbReference>
<dbReference type="GO" id="GO:0034220">
    <property type="term" value="P:monoatomic ion transmembrane transport"/>
    <property type="evidence" value="ECO:0007669"/>
    <property type="project" value="UniProtKB-KW"/>
</dbReference>
<dbReference type="GO" id="GO:0110039">
    <property type="term" value="P:positive regulation of nematode male tail tip morphogenesis"/>
    <property type="evidence" value="ECO:0000315"/>
    <property type="project" value="UniProtKB"/>
</dbReference>
<dbReference type="InterPro" id="IPR000990">
    <property type="entry name" value="Innexin"/>
</dbReference>
<dbReference type="PANTHER" id="PTHR11893">
    <property type="entry name" value="INNEXIN"/>
    <property type="match status" value="1"/>
</dbReference>
<dbReference type="PANTHER" id="PTHR11893:SF46">
    <property type="entry name" value="INNEXIN-12"/>
    <property type="match status" value="1"/>
</dbReference>
<dbReference type="Pfam" id="PF00876">
    <property type="entry name" value="Innexin"/>
    <property type="match status" value="1"/>
</dbReference>
<dbReference type="PRINTS" id="PR01262">
    <property type="entry name" value="INNEXIN"/>
</dbReference>
<dbReference type="PROSITE" id="PS51013">
    <property type="entry name" value="PANNEXIN"/>
    <property type="match status" value="1"/>
</dbReference>
<feature type="chain" id="PRO_0000208513" description="Innexin-12">
    <location>
        <begin position="1"/>
        <end position="408"/>
    </location>
</feature>
<feature type="transmembrane region" description="Helical" evidence="3">
    <location>
        <begin position="29"/>
        <end position="49"/>
    </location>
</feature>
<feature type="transmembrane region" description="Helical" evidence="3">
    <location>
        <begin position="113"/>
        <end position="133"/>
    </location>
</feature>
<feature type="transmembrane region" description="Helical" evidence="3">
    <location>
        <begin position="197"/>
        <end position="217"/>
    </location>
</feature>
<feature type="transmembrane region" description="Helical" evidence="3">
    <location>
        <begin position="284"/>
        <end position="304"/>
    </location>
</feature>
<feature type="glycosylation site" description="N-linked (GlcNAc...) asparagine" evidence="4">
    <location>
        <position position="99"/>
    </location>
</feature>
<protein>
    <recommendedName>
        <fullName>Innexin-12</fullName>
    </recommendedName>
    <alternativeName>
        <fullName>Protein opu-12</fullName>
    </alternativeName>
</protein>
<reference key="1">
    <citation type="journal article" date="1998" name="Science">
        <title>Genome sequence of the nematode C. elegans: a platform for investigating biology.</title>
        <authorList>
            <consortium name="The C. elegans sequencing consortium"/>
        </authorList>
    </citation>
    <scope>NUCLEOTIDE SEQUENCE [LARGE SCALE GENOMIC DNA]</scope>
    <source>
        <strain>Bristol N2</strain>
    </source>
</reference>
<reference key="2">
    <citation type="journal article" date="2007" name="Mol. Cell. Proteomics">
        <title>Proteomics reveals N-linked glycoprotein diversity in Caenorhabditis elegans and suggests an atypical translocation mechanism for integral membrane proteins.</title>
        <authorList>
            <person name="Kaji H."/>
            <person name="Kamiie J."/>
            <person name="Kawakami H."/>
            <person name="Kido K."/>
            <person name="Yamauchi Y."/>
            <person name="Shinkawa T."/>
            <person name="Taoka M."/>
            <person name="Takahashi N."/>
            <person name="Isobe T."/>
        </authorList>
    </citation>
    <scope>GLYCOSYLATION [LARGE SCALE ANALYSIS] AT ASN-99</scope>
    <scope>IDENTIFICATION BY MASS SPECTROMETRY</scope>
    <source>
        <strain>Bristol N2</strain>
    </source>
</reference>
<reference key="3">
    <citation type="journal article" date="2011" name="PLoS Genet.">
        <title>A bow-tie genetic architecture for morphogenesis suggested by a genome-wide RNAi screen in Caenorhabditis elegans.</title>
        <authorList>
            <person name="Nelson M.D."/>
            <person name="Zhou E."/>
            <person name="Kiontke K."/>
            <person name="Fradin H."/>
            <person name="Maldonado G."/>
            <person name="Martin D."/>
            <person name="Shah K."/>
            <person name="Fitch D.H."/>
        </authorList>
    </citation>
    <scope>FUNCTION</scope>
    <scope>DEVELOPMENTAL STAGE</scope>
    <scope>DISRUPTION PHENOTYPE</scope>
</reference>
<reference key="4">
    <citation type="journal article" date="2013" name="PLoS Genet.">
        <title>Filamin and phospholipase C-epsilon are required for calcium signaling in the Caenorhabditis elegans spermatheca.</title>
        <authorList>
            <person name="Kovacevic I."/>
            <person name="Orozco J.M."/>
            <person name="Cram E.J."/>
        </authorList>
    </citation>
    <scope>FUNCTION</scope>
    <scope>DISRUPTION PHENOTYPE</scope>
</reference>
<gene>
    <name evidence="8" type="primary">inx-12</name>
    <name evidence="8" type="synonym">opu-12</name>
    <name evidence="8" type="ORF">ZK770.3</name>
</gene>
<accession>O01634</accession>